<accession>Q3Z8Z3</accession>
<evidence type="ECO:0000255" key="1">
    <source>
        <dbReference type="HAMAP-Rule" id="MF_00815"/>
    </source>
</evidence>
<protein>
    <recommendedName>
        <fullName evidence="1">ATP synthase gamma chain</fullName>
    </recommendedName>
    <alternativeName>
        <fullName evidence="1">ATP synthase F1 sector gamma subunit</fullName>
    </alternativeName>
    <alternativeName>
        <fullName evidence="1">F-ATPase gamma subunit</fullName>
    </alternativeName>
</protein>
<reference key="1">
    <citation type="journal article" date="2005" name="Science">
        <title>Genome sequence of the PCE-dechlorinating bacterium Dehalococcoides ethenogenes.</title>
        <authorList>
            <person name="Seshadri R."/>
            <person name="Adrian L."/>
            <person name="Fouts D.E."/>
            <person name="Eisen J.A."/>
            <person name="Phillippy A.M."/>
            <person name="Methe B.A."/>
            <person name="Ward N.L."/>
            <person name="Nelson W.C."/>
            <person name="DeBoy R.T."/>
            <person name="Khouri H.M."/>
            <person name="Kolonay J.F."/>
            <person name="Dodson R.J."/>
            <person name="Daugherty S.C."/>
            <person name="Brinkac L.M."/>
            <person name="Sullivan S.A."/>
            <person name="Madupu R."/>
            <person name="Nelson K.E."/>
            <person name="Kang K.H."/>
            <person name="Impraim M."/>
            <person name="Tran K."/>
            <person name="Robinson J.M."/>
            <person name="Forberger H.A."/>
            <person name="Fraser C.M."/>
            <person name="Zinder S.H."/>
            <person name="Heidelberg J.F."/>
        </authorList>
    </citation>
    <scope>NUCLEOTIDE SEQUENCE [LARGE SCALE GENOMIC DNA]</scope>
    <source>
        <strain>ATCC BAA-2266 / KCTC 15142 / 195</strain>
    </source>
</reference>
<feature type="chain" id="PRO_1000053200" description="ATP synthase gamma chain">
    <location>
        <begin position="1"/>
        <end position="285"/>
    </location>
</feature>
<proteinExistence type="inferred from homology"/>
<organism>
    <name type="scientific">Dehalococcoides mccartyi (strain ATCC BAA-2266 / KCTC 15142 / 195)</name>
    <name type="common">Dehalococcoides ethenogenes (strain 195)</name>
    <dbReference type="NCBI Taxonomy" id="243164"/>
    <lineage>
        <taxon>Bacteria</taxon>
        <taxon>Bacillati</taxon>
        <taxon>Chloroflexota</taxon>
        <taxon>Dehalococcoidia</taxon>
        <taxon>Dehalococcoidales</taxon>
        <taxon>Dehalococcoidaceae</taxon>
        <taxon>Dehalococcoides</taxon>
    </lineage>
</organism>
<name>ATPG_DEHM1</name>
<comment type="function">
    <text evidence="1">Produces ATP from ADP in the presence of a proton gradient across the membrane. The gamma chain is believed to be important in regulating ATPase activity and the flow of protons through the CF(0) complex.</text>
</comment>
<comment type="subunit">
    <text evidence="1">F-type ATPases have 2 components, CF(1) - the catalytic core - and CF(0) - the membrane proton channel. CF(1) has five subunits: alpha(3), beta(3), gamma(1), delta(1), epsilon(1). CF(0) has three main subunits: a, b and c.</text>
</comment>
<comment type="subcellular location">
    <subcellularLocation>
        <location evidence="1">Cell membrane</location>
        <topology evidence="1">Peripheral membrane protein</topology>
    </subcellularLocation>
</comment>
<comment type="similarity">
    <text evidence="1">Belongs to the ATPase gamma chain family.</text>
</comment>
<sequence>MANIRIIKRRIRSVRNIAKITRAMEMIAASKMKKAQERGLAGRPYSEKITEVIAALAALPQSGEILHPLLERRPVKKIAVLHITPDRGQCGGLVANINRKTGTFMLEQKIPVSAVVVGRKGVDFIRRIKQQMRAEFINLGDRPGYLDTLPISRVIMDDFMSGEIDQVFIAYTQFVTTAVQKPVLEQLLPVVPLELPPGQNLEYIYEPESATVLNSLLPRFVEMSVYHAILESIASEQSARMVAMRNATDNAKELIGELTLVYNKARQESITNELLDIVGGAAALA</sequence>
<dbReference type="EMBL" id="CP000027">
    <property type="protein sequence ID" value="AAW40132.1"/>
    <property type="molecule type" value="Genomic_DNA"/>
</dbReference>
<dbReference type="RefSeq" id="WP_010936339.1">
    <property type="nucleotide sequence ID" value="NC_002936.3"/>
</dbReference>
<dbReference type="SMR" id="Q3Z8Z3"/>
<dbReference type="FunCoup" id="Q3Z8Z3">
    <property type="interactions" value="336"/>
</dbReference>
<dbReference type="STRING" id="243164.DET0563"/>
<dbReference type="GeneID" id="3230095"/>
<dbReference type="KEGG" id="det:DET0563"/>
<dbReference type="eggNOG" id="COG0224">
    <property type="taxonomic scope" value="Bacteria"/>
</dbReference>
<dbReference type="HOGENOM" id="CLU_050669_0_1_0"/>
<dbReference type="InParanoid" id="Q3Z8Z3"/>
<dbReference type="Proteomes" id="UP000008289">
    <property type="component" value="Chromosome"/>
</dbReference>
<dbReference type="GO" id="GO:0005886">
    <property type="term" value="C:plasma membrane"/>
    <property type="evidence" value="ECO:0007669"/>
    <property type="project" value="UniProtKB-SubCell"/>
</dbReference>
<dbReference type="GO" id="GO:0045259">
    <property type="term" value="C:proton-transporting ATP synthase complex"/>
    <property type="evidence" value="ECO:0007669"/>
    <property type="project" value="UniProtKB-KW"/>
</dbReference>
<dbReference type="GO" id="GO:0005524">
    <property type="term" value="F:ATP binding"/>
    <property type="evidence" value="ECO:0007669"/>
    <property type="project" value="UniProtKB-UniRule"/>
</dbReference>
<dbReference type="GO" id="GO:0046933">
    <property type="term" value="F:proton-transporting ATP synthase activity, rotational mechanism"/>
    <property type="evidence" value="ECO:0007669"/>
    <property type="project" value="UniProtKB-UniRule"/>
</dbReference>
<dbReference type="GO" id="GO:0042777">
    <property type="term" value="P:proton motive force-driven plasma membrane ATP synthesis"/>
    <property type="evidence" value="ECO:0007669"/>
    <property type="project" value="UniProtKB-UniRule"/>
</dbReference>
<dbReference type="CDD" id="cd12151">
    <property type="entry name" value="F1-ATPase_gamma"/>
    <property type="match status" value="1"/>
</dbReference>
<dbReference type="Gene3D" id="3.40.1380.10">
    <property type="match status" value="1"/>
</dbReference>
<dbReference type="Gene3D" id="1.10.287.80">
    <property type="entry name" value="ATP synthase, gamma subunit, helix hairpin domain"/>
    <property type="match status" value="2"/>
</dbReference>
<dbReference type="HAMAP" id="MF_00815">
    <property type="entry name" value="ATP_synth_gamma_bact"/>
    <property type="match status" value="1"/>
</dbReference>
<dbReference type="InterPro" id="IPR035968">
    <property type="entry name" value="ATP_synth_F1_ATPase_gsu"/>
</dbReference>
<dbReference type="InterPro" id="IPR000131">
    <property type="entry name" value="ATP_synth_F1_gsu"/>
</dbReference>
<dbReference type="InterPro" id="IPR023632">
    <property type="entry name" value="ATP_synth_F1_gsu_CS"/>
</dbReference>
<dbReference type="NCBIfam" id="TIGR01146">
    <property type="entry name" value="ATPsyn_F1gamma"/>
    <property type="match status" value="1"/>
</dbReference>
<dbReference type="PANTHER" id="PTHR11693">
    <property type="entry name" value="ATP SYNTHASE GAMMA CHAIN"/>
    <property type="match status" value="1"/>
</dbReference>
<dbReference type="PANTHER" id="PTHR11693:SF22">
    <property type="entry name" value="ATP SYNTHASE SUBUNIT GAMMA, MITOCHONDRIAL"/>
    <property type="match status" value="1"/>
</dbReference>
<dbReference type="Pfam" id="PF00231">
    <property type="entry name" value="ATP-synt"/>
    <property type="match status" value="1"/>
</dbReference>
<dbReference type="PRINTS" id="PR00126">
    <property type="entry name" value="ATPASEGAMMA"/>
</dbReference>
<dbReference type="SUPFAM" id="SSF52943">
    <property type="entry name" value="ATP synthase (F1-ATPase), gamma subunit"/>
    <property type="match status" value="1"/>
</dbReference>
<dbReference type="PROSITE" id="PS00153">
    <property type="entry name" value="ATPASE_GAMMA"/>
    <property type="match status" value="1"/>
</dbReference>
<keyword id="KW-0066">ATP synthesis</keyword>
<keyword id="KW-1003">Cell membrane</keyword>
<keyword id="KW-0139">CF(1)</keyword>
<keyword id="KW-0375">Hydrogen ion transport</keyword>
<keyword id="KW-0406">Ion transport</keyword>
<keyword id="KW-0472">Membrane</keyword>
<keyword id="KW-0813">Transport</keyword>
<gene>
    <name evidence="1" type="primary">atpG</name>
    <name type="ordered locus">DET0563</name>
</gene>